<evidence type="ECO:0000255" key="1"/>
<evidence type="ECO:0000305" key="2"/>
<organism>
    <name type="scientific">Pyrococcus horikoshii (strain ATCC 700860 / DSM 12428 / JCM 9974 / NBRC 100139 / OT-3)</name>
    <dbReference type="NCBI Taxonomy" id="70601"/>
    <lineage>
        <taxon>Archaea</taxon>
        <taxon>Methanobacteriati</taxon>
        <taxon>Methanobacteriota</taxon>
        <taxon>Thermococci</taxon>
        <taxon>Thermococcales</taxon>
        <taxon>Thermococcaceae</taxon>
        <taxon>Pyrococcus</taxon>
    </lineage>
</organism>
<gene>
    <name type="ordered locus">PH0672</name>
</gene>
<dbReference type="EMBL" id="BA000001">
    <property type="protein sequence ID" value="BAA29763.1"/>
    <property type="molecule type" value="Genomic_DNA"/>
</dbReference>
<dbReference type="PIR" id="A71113">
    <property type="entry name" value="A71113"/>
</dbReference>
<dbReference type="RefSeq" id="WP_010884764.1">
    <property type="nucleotide sequence ID" value="NC_000961.1"/>
</dbReference>
<dbReference type="SMR" id="O58405"/>
<dbReference type="STRING" id="70601.gene:9377617"/>
<dbReference type="EnsemblBacteria" id="BAA29763">
    <property type="protein sequence ID" value="BAA29763"/>
    <property type="gene ID" value="BAA29763"/>
</dbReference>
<dbReference type="GeneID" id="1442999"/>
<dbReference type="KEGG" id="pho:PH0672"/>
<dbReference type="eggNOG" id="arCOG02164">
    <property type="taxonomic scope" value="Archaea"/>
</dbReference>
<dbReference type="OrthoDB" id="86147at2157"/>
<dbReference type="Proteomes" id="UP000000752">
    <property type="component" value="Chromosome"/>
</dbReference>
<dbReference type="GO" id="GO:0005886">
    <property type="term" value="C:plasma membrane"/>
    <property type="evidence" value="ECO:0007669"/>
    <property type="project" value="UniProtKB-SubCell"/>
</dbReference>
<dbReference type="Gene3D" id="3.10.620.30">
    <property type="match status" value="1"/>
</dbReference>
<dbReference type="InterPro" id="IPR038765">
    <property type="entry name" value="Papain-like_cys_pep_sf"/>
</dbReference>
<dbReference type="InterPro" id="IPR007562">
    <property type="entry name" value="Transglutaminase-like_domain"/>
</dbReference>
<dbReference type="Pfam" id="PF04473">
    <property type="entry name" value="DUF553"/>
    <property type="match status" value="1"/>
</dbReference>
<dbReference type="SUPFAM" id="SSF54001">
    <property type="entry name" value="Cysteine proteinases"/>
    <property type="match status" value="1"/>
</dbReference>
<dbReference type="PROSITE" id="PS51257">
    <property type="entry name" value="PROKAR_LIPOPROTEIN"/>
    <property type="match status" value="1"/>
</dbReference>
<name>Y672_PYRHO</name>
<reference key="1">
    <citation type="journal article" date="1998" name="DNA Res.">
        <title>Complete sequence and gene organization of the genome of a hyper-thermophilic archaebacterium, Pyrococcus horikoshii OT3.</title>
        <authorList>
            <person name="Kawarabayasi Y."/>
            <person name="Sawada M."/>
            <person name="Horikawa H."/>
            <person name="Haikawa Y."/>
            <person name="Hino Y."/>
            <person name="Yamamoto S."/>
            <person name="Sekine M."/>
            <person name="Baba S."/>
            <person name="Kosugi H."/>
            <person name="Hosoyama A."/>
            <person name="Nagai Y."/>
            <person name="Sakai M."/>
            <person name="Ogura K."/>
            <person name="Otsuka R."/>
            <person name="Nakazawa H."/>
            <person name="Takamiya M."/>
            <person name="Ohfuku Y."/>
            <person name="Funahashi T."/>
            <person name="Tanaka T."/>
            <person name="Kudoh Y."/>
            <person name="Yamazaki J."/>
            <person name="Kushida N."/>
            <person name="Oguchi A."/>
            <person name="Aoki K."/>
            <person name="Yoshizawa T."/>
            <person name="Nakamura Y."/>
            <person name="Robb F.T."/>
            <person name="Horikoshi K."/>
            <person name="Masuchi Y."/>
            <person name="Shizuya H."/>
            <person name="Kikuchi H."/>
        </authorList>
    </citation>
    <scope>NUCLEOTIDE SEQUENCE [LARGE SCALE GENOMIC DNA]</scope>
    <source>
        <strain>ATCC 700860 / DSM 12428 / JCM 9974 / NBRC 100139 / OT-3</strain>
    </source>
</reference>
<feature type="chain" id="PRO_0000159560" description="UPF0252 protein PH0672">
    <location>
        <begin position="1"/>
        <end position="309"/>
    </location>
</feature>
<feature type="transmembrane region" description="Helical" evidence="1">
    <location>
        <begin position="5"/>
        <end position="25"/>
    </location>
</feature>
<feature type="transmembrane region" description="Helical" evidence="1">
    <location>
        <begin position="106"/>
        <end position="126"/>
    </location>
</feature>
<keyword id="KW-1003">Cell membrane</keyword>
<keyword id="KW-0472">Membrane</keyword>
<keyword id="KW-0812">Transmembrane</keyword>
<keyword id="KW-1133">Transmembrane helix</keyword>
<comment type="subcellular location">
    <subcellularLocation>
        <location evidence="2">Cell membrane</location>
        <topology evidence="2">Multi-pass membrane protein</topology>
    </subcellularLocation>
</comment>
<comment type="similarity">
    <text evidence="2">Belongs to the UPF0252 family.</text>
</comment>
<protein>
    <recommendedName>
        <fullName>UPF0252 protein PH0672</fullName>
    </recommendedName>
</protein>
<accession>O58405</accession>
<sequence length="309" mass="35540">MKKVSVIIFIVIMLGIGCLNLNESIKETCPRTSNITQAMSCYIPEDFEILKGVAEEIPGGTIEWKIWNILEWEEDHLSYDNNKGSDIILKPSEFIKVGEGVCTDYAVLTAGLLLASNISPVYLMIFHFMEDPTLHAAVAVNISGKLFILDQRLPPKNLDSYLIQFSKLEGKIILFAEMYKVEMKKGRVVVSGRKYLDLSNFGFYPGNISLDMLENLLLSEFQRRTNLFPRIDLKTVLPQGLKERKVWMIKFENFKLFYDDTFVEQYSNFIADEILKNEKIKSDISRYSAFWISIKLEGDDLIVRLFLGR</sequence>
<proteinExistence type="inferred from homology"/>